<gene>
    <name evidence="5" type="primary">CGS1</name>
    <name type="ORF">LOC107822634</name>
</gene>
<sequence>MAVSSCARAFPSFECRSDAEFSGGIPRHDIPNSGKASILSHGSSVHGLSSLIYRFPPNFVRQLSIKARRNCSNIGVAQVVAASWSNNNSSPDFTPVAKAVDAAAAAAAAIAPVDTTVVNEDVALVENETCNDQNVQFDSLPSMKYASFLNSDGSVAIHAGERLGRGIVTDAITTPVVNTSAYFFNKTSELIDFKEKRRASFEYGRYGNPTTVVLEEKISALEGAESTLLMASGMCASTVMLLALVPAGGHIVTTTDCYRKTRIFIETILPKMGITATVIDPADVGALELALNQKKVNLFFTESPTNPFLRCVDIELVSKLCHEKGALVCIDGTFATPLNQKALALGADLVLHSATKFLGGHNDVLAGCISGPLKLVSEIRNLHHILGGALNPNAAYLIIRGMKTLHLRVQQQNSTALRMAEILEAHPKVRHVYYPGLQSHPEHHIAKKQMTGFGGVVSFEVDGDLLTTAKFVDALKIPYIAPSFGGCESIVDQPAIMSYWDLSQSDRAKYGIMDNLVRFSFGVEDFDDLKADILQALDSI</sequence>
<name>CGS1_TOBAC</name>
<organism>
    <name type="scientific">Nicotiana tabacum</name>
    <name type="common">Common tobacco</name>
    <dbReference type="NCBI Taxonomy" id="4097"/>
    <lineage>
        <taxon>Eukaryota</taxon>
        <taxon>Viridiplantae</taxon>
        <taxon>Streptophyta</taxon>
        <taxon>Embryophyta</taxon>
        <taxon>Tracheophyta</taxon>
        <taxon>Spermatophyta</taxon>
        <taxon>Magnoliopsida</taxon>
        <taxon>eudicotyledons</taxon>
        <taxon>Gunneridae</taxon>
        <taxon>Pentapetalae</taxon>
        <taxon>asterids</taxon>
        <taxon>lamiids</taxon>
        <taxon>Solanales</taxon>
        <taxon>Solanaceae</taxon>
        <taxon>Nicotianoideae</taxon>
        <taxon>Nicotianeae</taxon>
        <taxon>Nicotiana</taxon>
    </lineage>
</organism>
<keyword id="KW-0002">3D-structure</keyword>
<keyword id="KW-0150">Chloroplast</keyword>
<keyword id="KW-0934">Plastid</keyword>
<keyword id="KW-0663">Pyridoxal phosphate</keyword>
<keyword id="KW-1185">Reference proteome</keyword>
<keyword id="KW-0808">Transferase</keyword>
<keyword id="KW-0809">Transit peptide</keyword>
<feature type="transit peptide" description="Chloroplast" evidence="1">
    <location>
        <begin position="1"/>
        <end position="78"/>
    </location>
</feature>
<feature type="chain" id="PRO_0000462368" description="Cystathionine gamma-synthase 1, chloroplastic">
    <location>
        <begin position="79"/>
        <end position="540"/>
    </location>
</feature>
<feature type="binding site" evidence="2 4 7 8 9">
    <location>
        <position position="203"/>
    </location>
    <ligand>
        <name>pyridoxal 5'-phosphate</name>
        <dbReference type="ChEBI" id="CHEBI:597326"/>
    </ligand>
</feature>
<feature type="binding site" evidence="2 4 7 8 9">
    <location>
        <position position="205"/>
    </location>
    <ligand>
        <name>pyridoxal 5'-phosphate</name>
        <dbReference type="ChEBI" id="CHEBI:597326"/>
    </ligand>
</feature>
<feature type="binding site" evidence="2 4 7 8 9">
    <location>
        <position position="233"/>
    </location>
    <ligand>
        <name>pyridoxal 5'-phosphate</name>
        <dbReference type="ChEBI" id="CHEBI:597326"/>
    </ligand>
</feature>
<feature type="binding site" evidence="2 4 7 8 9">
    <location>
        <position position="234"/>
    </location>
    <ligand>
        <name>pyridoxal 5'-phosphate</name>
        <dbReference type="ChEBI" id="CHEBI:597326"/>
    </ligand>
</feature>
<feature type="binding site" evidence="2 4 8 9">
    <location>
        <position position="258"/>
    </location>
    <ligand>
        <name>pyridoxal 5'-phosphate</name>
        <dbReference type="ChEBI" id="CHEBI:597326"/>
    </ligand>
</feature>
<feature type="binding site" evidence="2 4 7 8 9">
    <location>
        <position position="353"/>
    </location>
    <ligand>
        <name>pyridoxal 5'-phosphate</name>
        <dbReference type="ChEBI" id="CHEBI:597326"/>
    </ligand>
</feature>
<feature type="binding site" evidence="2 4 7 8 9">
    <location>
        <position position="355"/>
    </location>
    <ligand>
        <name>pyridoxal 5'-phosphate</name>
        <dbReference type="ChEBI" id="CHEBI:597326"/>
    </ligand>
</feature>
<feature type="modified residue" description="N6-(pyridoxal phosphate)lysine" evidence="2 4 7 8 9">
    <location>
        <position position="356"/>
    </location>
</feature>
<feature type="sequence conflict" description="In Ref. 1; AHM22940 and 3; AAD16143." evidence="5" ref="1 3">
    <original>V</original>
    <variation>A</variation>
    <location>
        <position position="456"/>
    </location>
</feature>
<dbReference type="EC" id="2.5.1.160" evidence="3"/>
<dbReference type="EMBL" id="KJ001150">
    <property type="protein sequence ID" value="AHM22940.1"/>
    <property type="molecule type" value="mRNA"/>
</dbReference>
<dbReference type="EMBL" id="AF097180">
    <property type="protein sequence ID" value="AAD16143.1"/>
    <property type="molecule type" value="mRNA"/>
</dbReference>
<dbReference type="RefSeq" id="NP_001313029.1">
    <property type="nucleotide sequence ID" value="NM_001326100.1"/>
</dbReference>
<dbReference type="PDB" id="1I41">
    <property type="method" value="X-ray"/>
    <property type="resolution" value="3.20 A"/>
    <property type="chains" value="A/B/C/D/E/F/G/H/I/J/K/L=97-540"/>
</dbReference>
<dbReference type="PDB" id="1I43">
    <property type="method" value="X-ray"/>
    <property type="resolution" value="3.10 A"/>
    <property type="chains" value="A/B/C/D/E/F/G/H/I/J/K/L=97-540"/>
</dbReference>
<dbReference type="PDB" id="1I48">
    <property type="method" value="X-ray"/>
    <property type="resolution" value="3.25 A"/>
    <property type="chains" value="A/B/C/D/E/F/G/H/I/J/K/L=97-540"/>
</dbReference>
<dbReference type="PDB" id="1QGN">
    <property type="method" value="X-ray"/>
    <property type="resolution" value="2.90 A"/>
    <property type="chains" value="A/B/C/D/E/F/G/H=97-540"/>
</dbReference>
<dbReference type="PDBsum" id="1I41"/>
<dbReference type="PDBsum" id="1I43"/>
<dbReference type="PDBsum" id="1I48"/>
<dbReference type="PDBsum" id="1QGN"/>
<dbReference type="GeneID" id="107822634"/>
<dbReference type="KEGG" id="nta:107822634"/>
<dbReference type="OMA" id="CHPGLAN"/>
<dbReference type="OrthoDB" id="6018at2759"/>
<dbReference type="UniPathway" id="UPA00051">
    <property type="reaction ID" value="UER00077"/>
</dbReference>
<dbReference type="EvolutionaryTrace" id="Q9ZPL5"/>
<dbReference type="Proteomes" id="UP000084051">
    <property type="component" value="Unplaced"/>
</dbReference>
<dbReference type="GO" id="GO:0003962">
    <property type="term" value="F:cystathionine gamma-synthase activity"/>
    <property type="evidence" value="ECO:0007669"/>
    <property type="project" value="InterPro"/>
</dbReference>
<dbReference type="GO" id="GO:0030170">
    <property type="term" value="F:pyridoxal phosphate binding"/>
    <property type="evidence" value="ECO:0007669"/>
    <property type="project" value="InterPro"/>
</dbReference>
<dbReference type="GO" id="GO:0009086">
    <property type="term" value="P:methionine biosynthetic process"/>
    <property type="evidence" value="ECO:0007669"/>
    <property type="project" value="InterPro"/>
</dbReference>
<dbReference type="GO" id="GO:0019346">
    <property type="term" value="P:transsulfuration"/>
    <property type="evidence" value="ECO:0007669"/>
    <property type="project" value="InterPro"/>
</dbReference>
<dbReference type="CDD" id="cd00614">
    <property type="entry name" value="CGS_like"/>
    <property type="match status" value="1"/>
</dbReference>
<dbReference type="FunFam" id="3.40.640.10:FF:000046">
    <property type="entry name" value="Cystathionine gamma-lyase"/>
    <property type="match status" value="1"/>
</dbReference>
<dbReference type="FunFam" id="3.90.1150.10:FF:000033">
    <property type="entry name" value="Cystathionine gamma-synthase"/>
    <property type="match status" value="1"/>
</dbReference>
<dbReference type="Gene3D" id="3.90.1150.10">
    <property type="entry name" value="Aspartate Aminotransferase, domain 1"/>
    <property type="match status" value="1"/>
</dbReference>
<dbReference type="Gene3D" id="3.40.640.10">
    <property type="entry name" value="Type I PLP-dependent aspartate aminotransferase-like (Major domain)"/>
    <property type="match status" value="1"/>
</dbReference>
<dbReference type="InterPro" id="IPR044639">
    <property type="entry name" value="CGS1/2"/>
</dbReference>
<dbReference type="InterPro" id="IPR000277">
    <property type="entry name" value="Cys/Met-Metab_PyrdxlP-dep_enz"/>
</dbReference>
<dbReference type="InterPro" id="IPR054542">
    <property type="entry name" value="Cys_met_metab_PP"/>
</dbReference>
<dbReference type="InterPro" id="IPR015424">
    <property type="entry name" value="PyrdxlP-dep_Trfase"/>
</dbReference>
<dbReference type="InterPro" id="IPR015421">
    <property type="entry name" value="PyrdxlP-dep_Trfase_major"/>
</dbReference>
<dbReference type="InterPro" id="IPR015422">
    <property type="entry name" value="PyrdxlP-dep_Trfase_small"/>
</dbReference>
<dbReference type="PANTHER" id="PTHR43379">
    <property type="entry name" value="CYSTATHIONINE GAMMA-SYNTHASE"/>
    <property type="match status" value="1"/>
</dbReference>
<dbReference type="PANTHER" id="PTHR43379:SF5">
    <property type="entry name" value="CYSTATHIONINE GAMMA-SYNTHASE 1, CHLOROPLASTIC-LIKE ISOFORM X1"/>
    <property type="match status" value="1"/>
</dbReference>
<dbReference type="Pfam" id="PF01053">
    <property type="entry name" value="Cys_Met_Meta_PP"/>
    <property type="match status" value="1"/>
</dbReference>
<dbReference type="PIRSF" id="PIRSF001434">
    <property type="entry name" value="CGS"/>
    <property type="match status" value="1"/>
</dbReference>
<dbReference type="SUPFAM" id="SSF53383">
    <property type="entry name" value="PLP-dependent transferases"/>
    <property type="match status" value="1"/>
</dbReference>
<dbReference type="PROSITE" id="PS00868">
    <property type="entry name" value="CYS_MET_METAB_PP"/>
    <property type="match status" value="1"/>
</dbReference>
<proteinExistence type="evidence at protein level"/>
<accession>Q9ZPL5</accession>
<accession>W8SGH6</accession>
<evidence type="ECO:0000255" key="1"/>
<evidence type="ECO:0000269" key="2">
    <source>
    </source>
</evidence>
<evidence type="ECO:0000269" key="3">
    <source>
    </source>
</evidence>
<evidence type="ECO:0000269" key="4">
    <source>
    </source>
</evidence>
<evidence type="ECO:0000305" key="5"/>
<evidence type="ECO:0000305" key="6">
    <source>
    </source>
</evidence>
<evidence type="ECO:0007744" key="7">
    <source>
        <dbReference type="PDB" id="1I43"/>
    </source>
</evidence>
<evidence type="ECO:0007744" key="8">
    <source>
        <dbReference type="PDB" id="1I48"/>
    </source>
</evidence>
<evidence type="ECO:0007744" key="9">
    <source>
        <dbReference type="PDB" id="1QGN"/>
    </source>
</evidence>
<comment type="function">
    <text evidence="3">Catalyzes the first committed step of methionine (Met) biosynthesis. Catalyzes the formation of L-cystathionine from homoserine esters and L-cysteine, via a gamma-replacement reaction.</text>
</comment>
<comment type="catalytic activity">
    <reaction evidence="3">
        <text>O-phospho-L-homoserine + L-cysteine = L,L-cystathionine + phosphate</text>
        <dbReference type="Rhea" id="RHEA:80891"/>
        <dbReference type="ChEBI" id="CHEBI:35235"/>
        <dbReference type="ChEBI" id="CHEBI:43474"/>
        <dbReference type="ChEBI" id="CHEBI:57590"/>
        <dbReference type="ChEBI" id="CHEBI:58161"/>
        <dbReference type="EC" id="2.5.1.160"/>
    </reaction>
</comment>
<comment type="catalytic activity">
    <reaction evidence="6">
        <text>O-succinyl-L-homoserine + L-cysteine = L,L-cystathionine + succinate + H(+)</text>
        <dbReference type="Rhea" id="RHEA:20397"/>
        <dbReference type="ChEBI" id="CHEBI:15378"/>
        <dbReference type="ChEBI" id="CHEBI:30031"/>
        <dbReference type="ChEBI" id="CHEBI:35235"/>
        <dbReference type="ChEBI" id="CHEBI:57661"/>
        <dbReference type="ChEBI" id="CHEBI:58161"/>
    </reaction>
</comment>
<comment type="cofactor">
    <cofactor evidence="2 4">
        <name>pyridoxal 5'-phosphate</name>
        <dbReference type="ChEBI" id="CHEBI:597326"/>
    </cofactor>
    <text evidence="2 4">Binds 1 pyridoxal 5'-phosphate per subunit.</text>
</comment>
<comment type="activity regulation">
    <text evidence="3">Irreversibly inactivated by DL-propargylglycine.</text>
</comment>
<comment type="biophysicochemical properties">
    <kinetics>
        <KM evidence="3">7.1 mM for O-phospho-L-homoserine</KM>
        <KM evidence="3">0.23 mM for L-cysteine</KM>
        <Vmax evidence="3">3.2 umol/min/mg enzyme with L-cysteine as substrate</Vmax>
    </kinetics>
</comment>
<comment type="pathway">
    <text evidence="3">Amino-acid biosynthesis; L-methionine biosynthesis via de novo pathway; L-cystathionine from O-succinyl-L-homoserine: step 1/1.</text>
</comment>
<comment type="subunit">
    <text evidence="2 4">Forms homotetramers composed of 2 homodimers.</text>
</comment>
<comment type="subcellular location">
    <subcellularLocation>
        <location evidence="1">Plastid</location>
        <location evidence="1">Chloroplast</location>
    </subcellularLocation>
</comment>
<comment type="similarity">
    <text evidence="5">Belongs to the trans-sulfuration enzymes family.</text>
</comment>
<reference key="1">
    <citation type="submission" date="2013-12" db="EMBL/GenBank/DDBJ databases">
        <authorList>
            <person name="Liu Y."/>
        </authorList>
    </citation>
    <scope>NUCLEOTIDE SEQUENCE [MRNA]</scope>
</reference>
<reference key="2">
    <citation type="journal article" date="2014" name="Nat. Commun.">
        <title>The tobacco genome sequence and its comparison with those of tomato and potato.</title>
        <authorList>
            <person name="Sierro N."/>
            <person name="Battey J.N."/>
            <person name="Ouadi S."/>
            <person name="Bakaher N."/>
            <person name="Bovet L."/>
            <person name="Willig A."/>
            <person name="Goepfert S."/>
            <person name="Peitsch M.C."/>
            <person name="Ivanov N.V."/>
        </authorList>
    </citation>
    <scope>NUCLEOTIDE SEQUENCE [LARGE SCALE GENOMIC DNA]</scope>
    <source>
        <strain>cv. TN90</strain>
    </source>
</reference>
<reference key="3">
    <citation type="journal article" date="1999" name="Biol. Chem.">
        <title>Cloning, purification and characterisation of cystathionine gamma-synthase from Nicotiana tabacum.</title>
        <authorList>
            <person name="Clausen T."/>
            <person name="Wahl M.C."/>
            <person name="Messerschmidt A."/>
            <person name="Huber R."/>
            <person name="Fuhrmann J.C."/>
            <person name="Laber B."/>
            <person name="Streber W."/>
            <person name="Steegborn C."/>
        </authorList>
    </citation>
    <scope>NUCLEOTIDE SEQUENCE [MRNA] OF 97-540</scope>
    <scope>FUNCTION</scope>
    <scope>CATALYTIC ACTIVITY</scope>
    <scope>BIOPHYSICOCHEMICAL PROPERTIES</scope>
    <scope>ACTIVITY REGULATION</scope>
</reference>
<reference key="4">
    <citation type="journal article" date="1999" name="J. Mol. Biol.">
        <title>The crystal structure of cystathionine gamma-synthase from Nicotiana tabacum reveals its substrate and reaction specificity.</title>
        <authorList>
            <person name="Steegborn C."/>
            <person name="Messerschmidt A."/>
            <person name="Laber B."/>
            <person name="Streber W."/>
            <person name="Huber R."/>
            <person name="Clausen T."/>
        </authorList>
    </citation>
    <scope>X-RAY CRYSTALLOGRAPHY (2.90 ANGSTROMS) IN COMPLEX WITH PYRIDOXAL PHOSPHATE AT LYS-356</scope>
    <scope>COFACTOR</scope>
    <scope>SUBUNIT</scope>
</reference>
<reference key="5">
    <citation type="journal article" date="2001" name="J. Mol. Biol.">
        <title>Crystal structures of cystathionine gamma-synthase inhibitor complexes rationalize the increased affinity of a novel inhibitor.</title>
        <authorList>
            <person name="Steegborn C."/>
            <person name="Laber B."/>
            <person name="Messerschmidt A."/>
            <person name="Huber R."/>
            <person name="Clausen T."/>
        </authorList>
    </citation>
    <scope>X-RAY CRYSTALLOGRAPHY (3.10 ANGSTROMS) IN COMPLEX WITH PYRIDOXAL PHOSPHATE AT LYS-356</scope>
    <scope>COFACTOR</scope>
    <scope>SUBUNIT</scope>
</reference>
<protein>
    <recommendedName>
        <fullName>Cystathionine gamma-synthase 1, chloroplastic</fullName>
        <ecNumber evidence="3">2.5.1.160</ecNumber>
    </recommendedName>
</protein>